<evidence type="ECO:0000250" key="1"/>
<evidence type="ECO:0000250" key="2">
    <source>
        <dbReference type="UniProtKB" id="P01298"/>
    </source>
</evidence>
<evidence type="ECO:0000303" key="3">
    <source>
    </source>
</evidence>
<evidence type="ECO:0000305" key="4"/>
<sequence>TPLQPKYPGDGAPVEDLIQFYDDLQQYLNVVTRPRF</sequence>
<feature type="peptide" id="PRO_0000044807" description="Pancreatic polypeptide">
    <location>
        <begin position="1"/>
        <end position="36"/>
    </location>
</feature>
<feature type="modified residue" description="Phenylalanine amide" evidence="1">
    <location>
        <position position="36"/>
    </location>
</feature>
<feature type="sequence conflict" description="In Ref. 2; AA sequence." evidence="4" ref="2">
    <original>D</original>
    <variation>N</variation>
    <location>
        <position position="22"/>
    </location>
</feature>
<accession>P06305</accession>
<protein>
    <recommendedName>
        <fullName evidence="3">Pancreatic polypeptide</fullName>
        <shortName evidence="3">PP</shortName>
    </recommendedName>
</protein>
<name>PAHO_ALLMI</name>
<keyword id="KW-0027">Amidation</keyword>
<keyword id="KW-0903">Direct protein sequencing</keyword>
<keyword id="KW-0372">Hormone</keyword>
<keyword id="KW-0964">Secreted</keyword>
<dbReference type="PIR" id="A01577">
    <property type="entry name" value="PCAQ"/>
</dbReference>
<dbReference type="SMR" id="P06305"/>
<dbReference type="GO" id="GO:0005576">
    <property type="term" value="C:extracellular region"/>
    <property type="evidence" value="ECO:0007669"/>
    <property type="project" value="UniProtKB-SubCell"/>
</dbReference>
<dbReference type="GO" id="GO:0005179">
    <property type="term" value="F:hormone activity"/>
    <property type="evidence" value="ECO:0007669"/>
    <property type="project" value="UniProtKB-KW"/>
</dbReference>
<dbReference type="CDD" id="cd00126">
    <property type="entry name" value="PAH"/>
    <property type="match status" value="1"/>
</dbReference>
<dbReference type="Gene3D" id="6.10.250.900">
    <property type="match status" value="1"/>
</dbReference>
<dbReference type="InterPro" id="IPR001955">
    <property type="entry name" value="Pancreatic_hormone-like"/>
</dbReference>
<dbReference type="InterPro" id="IPR020392">
    <property type="entry name" value="Pancreatic_hormone-like_CS"/>
</dbReference>
<dbReference type="Pfam" id="PF00159">
    <property type="entry name" value="Hormone_3"/>
    <property type="match status" value="1"/>
</dbReference>
<dbReference type="PRINTS" id="PR00278">
    <property type="entry name" value="PANCHORMONE"/>
</dbReference>
<dbReference type="SMART" id="SM00309">
    <property type="entry name" value="PAH"/>
    <property type="match status" value="1"/>
</dbReference>
<dbReference type="PROSITE" id="PS00265">
    <property type="entry name" value="PANCREATIC_HORMONE_1"/>
    <property type="match status" value="1"/>
</dbReference>
<dbReference type="PROSITE" id="PS50276">
    <property type="entry name" value="PANCREATIC_HORMONE_2"/>
    <property type="match status" value="1"/>
</dbReference>
<reference key="1">
    <citation type="journal article" date="1984" name="Eur. J. Biochem.">
        <title>Conformational studies on the pancreatic polypeptide hormone family.</title>
        <authorList>
            <person name="Glover I.D."/>
            <person name="Barlow D.J."/>
            <person name="Pitts J.E."/>
            <person name="Wood S.P."/>
            <person name="Tickle I.J."/>
            <person name="Blundell T.L."/>
            <person name="Tatemoto K."/>
            <person name="Kimmel J.R."/>
            <person name="Wollmer A."/>
            <person name="Strassburger W."/>
            <person name="Zhang Y.S."/>
        </authorList>
    </citation>
    <scope>PROTEIN SEQUENCE</scope>
</reference>
<reference key="2">
    <citation type="journal article" date="1984" name="Gen. Comp. Endocrinol.">
        <title>Isolation and characterization of reptilian insulin, glucagon, and pancreatic polypeptide: complete amino acid sequence of alligator (Alligator mississippiensis) insulin and pancreatic polypeptide.</title>
        <authorList>
            <person name="Lance V."/>
            <person name="Hamilton J.W."/>
            <person name="Rouse J.B."/>
            <person name="Kimmel J.R."/>
            <person name="Pollock H.G."/>
        </authorList>
    </citation>
    <scope>PROTEIN SEQUENCE</scope>
</reference>
<gene>
    <name type="primary">ppy</name>
</gene>
<comment type="function">
    <text evidence="2">Hormone secreted by pancreatic cells that acts as a regulator of pancreatic and gastrointestinal functions.</text>
</comment>
<comment type="subcellular location">
    <subcellularLocation>
        <location evidence="2">Secreted</location>
    </subcellularLocation>
</comment>
<comment type="similarity">
    <text evidence="4">Belongs to the NPY family.</text>
</comment>
<organism>
    <name type="scientific">Alligator mississippiensis</name>
    <name type="common">American alligator</name>
    <dbReference type="NCBI Taxonomy" id="8496"/>
    <lineage>
        <taxon>Eukaryota</taxon>
        <taxon>Metazoa</taxon>
        <taxon>Chordata</taxon>
        <taxon>Craniata</taxon>
        <taxon>Vertebrata</taxon>
        <taxon>Euteleostomi</taxon>
        <taxon>Archelosauria</taxon>
        <taxon>Archosauria</taxon>
        <taxon>Crocodylia</taxon>
        <taxon>Alligatoridae</taxon>
        <taxon>Alligatorinae</taxon>
        <taxon>Alligator</taxon>
    </lineage>
</organism>
<proteinExistence type="evidence at protein level"/>